<proteinExistence type="inferred from homology"/>
<accession>B5RLX5</accession>
<gene>
    <name evidence="1" type="primary">adk</name>
    <name type="ordered locus">BDU_411</name>
</gene>
<organism>
    <name type="scientific">Borrelia duttonii (strain Ly)</name>
    <dbReference type="NCBI Taxonomy" id="412419"/>
    <lineage>
        <taxon>Bacteria</taxon>
        <taxon>Pseudomonadati</taxon>
        <taxon>Spirochaetota</taxon>
        <taxon>Spirochaetia</taxon>
        <taxon>Spirochaetales</taxon>
        <taxon>Borreliaceae</taxon>
        <taxon>Borrelia</taxon>
    </lineage>
</organism>
<comment type="function">
    <text evidence="1">Catalyzes the reversible transfer of the terminal phosphate group between ATP and AMP. Plays an important role in cellular energy homeostasis and in adenine nucleotide metabolism.</text>
</comment>
<comment type="catalytic activity">
    <reaction evidence="1">
        <text>AMP + ATP = 2 ADP</text>
        <dbReference type="Rhea" id="RHEA:12973"/>
        <dbReference type="ChEBI" id="CHEBI:30616"/>
        <dbReference type="ChEBI" id="CHEBI:456215"/>
        <dbReference type="ChEBI" id="CHEBI:456216"/>
        <dbReference type="EC" id="2.7.4.3"/>
    </reaction>
</comment>
<comment type="pathway">
    <text evidence="1">Purine metabolism; AMP biosynthesis via salvage pathway; AMP from ADP: step 1/1.</text>
</comment>
<comment type="subunit">
    <text evidence="1">Monomer.</text>
</comment>
<comment type="subcellular location">
    <subcellularLocation>
        <location evidence="1">Cytoplasm</location>
    </subcellularLocation>
</comment>
<comment type="domain">
    <text evidence="1">Consists of three domains, a large central CORE domain and two small peripheral domains, NMPbind and LID, which undergo movements during catalysis. The LID domain closes over the site of phosphoryl transfer upon ATP binding. Assembling and dissambling the active center during each catalytic cycle provides an effective means to prevent ATP hydrolysis. Some bacteria have evolved a zinc-coordinating structure that stabilizes the LID domain.</text>
</comment>
<comment type="similarity">
    <text evidence="1">Belongs to the adenylate kinase family.</text>
</comment>
<feature type="chain" id="PRO_1000100531" description="Adenylate kinase">
    <location>
        <begin position="1"/>
        <end position="213"/>
    </location>
</feature>
<feature type="region of interest" description="NMP" evidence="1">
    <location>
        <begin position="30"/>
        <end position="59"/>
    </location>
</feature>
<feature type="region of interest" description="LID" evidence="1">
    <location>
        <begin position="121"/>
        <end position="158"/>
    </location>
</feature>
<feature type="binding site" evidence="1">
    <location>
        <begin position="10"/>
        <end position="15"/>
    </location>
    <ligand>
        <name>ATP</name>
        <dbReference type="ChEBI" id="CHEBI:30616"/>
    </ligand>
</feature>
<feature type="binding site" evidence="1">
    <location>
        <position position="31"/>
    </location>
    <ligand>
        <name>AMP</name>
        <dbReference type="ChEBI" id="CHEBI:456215"/>
    </ligand>
</feature>
<feature type="binding site" evidence="1">
    <location>
        <position position="36"/>
    </location>
    <ligand>
        <name>AMP</name>
        <dbReference type="ChEBI" id="CHEBI:456215"/>
    </ligand>
</feature>
<feature type="binding site" evidence="1">
    <location>
        <begin position="57"/>
        <end position="59"/>
    </location>
    <ligand>
        <name>AMP</name>
        <dbReference type="ChEBI" id="CHEBI:456215"/>
    </ligand>
</feature>
<feature type="binding site" evidence="1">
    <location>
        <begin position="85"/>
        <end position="88"/>
    </location>
    <ligand>
        <name>AMP</name>
        <dbReference type="ChEBI" id="CHEBI:456215"/>
    </ligand>
</feature>
<feature type="binding site" evidence="1">
    <location>
        <position position="92"/>
    </location>
    <ligand>
        <name>AMP</name>
        <dbReference type="ChEBI" id="CHEBI:456215"/>
    </ligand>
</feature>
<feature type="binding site" evidence="1">
    <location>
        <position position="122"/>
    </location>
    <ligand>
        <name>ATP</name>
        <dbReference type="ChEBI" id="CHEBI:30616"/>
    </ligand>
</feature>
<feature type="binding site" evidence="1">
    <location>
        <position position="125"/>
    </location>
    <ligand>
        <name>Zn(2+)</name>
        <dbReference type="ChEBI" id="CHEBI:29105"/>
        <note>structural</note>
    </ligand>
</feature>
<feature type="binding site" evidence="1">
    <location>
        <position position="128"/>
    </location>
    <ligand>
        <name>Zn(2+)</name>
        <dbReference type="ChEBI" id="CHEBI:29105"/>
        <note>structural</note>
    </ligand>
</feature>
<feature type="binding site" evidence="1">
    <location>
        <begin position="131"/>
        <end position="132"/>
    </location>
    <ligand>
        <name>ATP</name>
        <dbReference type="ChEBI" id="CHEBI:30616"/>
    </ligand>
</feature>
<feature type="binding site" evidence="1">
    <location>
        <position position="145"/>
    </location>
    <ligand>
        <name>Zn(2+)</name>
        <dbReference type="ChEBI" id="CHEBI:29105"/>
        <note>structural</note>
    </ligand>
</feature>
<feature type="binding site" evidence="1">
    <location>
        <position position="148"/>
    </location>
    <ligand>
        <name>Zn(2+)</name>
        <dbReference type="ChEBI" id="CHEBI:29105"/>
        <note>structural</note>
    </ligand>
</feature>
<feature type="binding site" evidence="1">
    <location>
        <position position="155"/>
    </location>
    <ligand>
        <name>AMP</name>
        <dbReference type="ChEBI" id="CHEBI:456215"/>
    </ligand>
</feature>
<feature type="binding site" evidence="1">
    <location>
        <position position="166"/>
    </location>
    <ligand>
        <name>AMP</name>
        <dbReference type="ChEBI" id="CHEBI:456215"/>
    </ligand>
</feature>
<feature type="binding site" evidence="1">
    <location>
        <position position="194"/>
    </location>
    <ligand>
        <name>ATP</name>
        <dbReference type="ChEBI" id="CHEBI:30616"/>
    </ligand>
</feature>
<keyword id="KW-0067">ATP-binding</keyword>
<keyword id="KW-0963">Cytoplasm</keyword>
<keyword id="KW-0418">Kinase</keyword>
<keyword id="KW-0479">Metal-binding</keyword>
<keyword id="KW-0545">Nucleotide biosynthesis</keyword>
<keyword id="KW-0547">Nucleotide-binding</keyword>
<keyword id="KW-0808">Transferase</keyword>
<keyword id="KW-0862">Zinc</keyword>
<sequence length="213" mass="24564">MKLVFLGPPGSGKGTIAKILSNELNYYHISTGDLFRTNIENDTPLGKEIKQIVENGQLVPDSITIKVVEDKINTIDNRDNFILDGFPRNINQAIELDRLLENIKIINFLIDEKLLVKRLSGRRICQSCCKIFNIYTLPTKEKEICDFCQGILYQRKDDTKESLKIRLQEYNLQTKPLINFYSNSNRLNNIDASKNINEVQKNLMEIISKIEKN</sequence>
<reference key="1">
    <citation type="journal article" date="2008" name="PLoS Genet.">
        <title>The genome of Borrelia recurrentis, the agent of deadly louse-borne relapsing fever, is a degraded subset of tick-borne Borrelia duttonii.</title>
        <authorList>
            <person name="Lescot M."/>
            <person name="Audic S."/>
            <person name="Robert C."/>
            <person name="Nguyen T.T."/>
            <person name="Blanc G."/>
            <person name="Cutler S.J."/>
            <person name="Wincker P."/>
            <person name="Couloux A."/>
            <person name="Claverie J.-M."/>
            <person name="Raoult D."/>
            <person name="Drancourt M."/>
        </authorList>
    </citation>
    <scope>NUCLEOTIDE SEQUENCE [LARGE SCALE GENOMIC DNA]</scope>
    <source>
        <strain>Ly</strain>
    </source>
</reference>
<evidence type="ECO:0000255" key="1">
    <source>
        <dbReference type="HAMAP-Rule" id="MF_00235"/>
    </source>
</evidence>
<name>KAD_BORDL</name>
<dbReference type="EC" id="2.7.4.3" evidence="1"/>
<dbReference type="EMBL" id="CP000976">
    <property type="protein sequence ID" value="ACH93361.1"/>
    <property type="molecule type" value="Genomic_DNA"/>
</dbReference>
<dbReference type="RefSeq" id="WP_012538172.1">
    <property type="nucleotide sequence ID" value="NC_011229.1"/>
</dbReference>
<dbReference type="SMR" id="B5RLX5"/>
<dbReference type="STRING" id="412419.BDU_411"/>
<dbReference type="KEGG" id="bdu:BDU_411"/>
<dbReference type="eggNOG" id="COG0563">
    <property type="taxonomic scope" value="Bacteria"/>
</dbReference>
<dbReference type="HOGENOM" id="CLU_032354_1_2_12"/>
<dbReference type="OrthoDB" id="9805030at2"/>
<dbReference type="UniPathway" id="UPA00588">
    <property type="reaction ID" value="UER00649"/>
</dbReference>
<dbReference type="Proteomes" id="UP000000611">
    <property type="component" value="Chromosome"/>
</dbReference>
<dbReference type="GO" id="GO:0005737">
    <property type="term" value="C:cytoplasm"/>
    <property type="evidence" value="ECO:0007669"/>
    <property type="project" value="UniProtKB-SubCell"/>
</dbReference>
<dbReference type="GO" id="GO:0004017">
    <property type="term" value="F:adenylate kinase activity"/>
    <property type="evidence" value="ECO:0007669"/>
    <property type="project" value="UniProtKB-UniRule"/>
</dbReference>
<dbReference type="GO" id="GO:0005524">
    <property type="term" value="F:ATP binding"/>
    <property type="evidence" value="ECO:0007669"/>
    <property type="project" value="UniProtKB-UniRule"/>
</dbReference>
<dbReference type="GO" id="GO:0008270">
    <property type="term" value="F:zinc ion binding"/>
    <property type="evidence" value="ECO:0007669"/>
    <property type="project" value="UniProtKB-UniRule"/>
</dbReference>
<dbReference type="GO" id="GO:0044209">
    <property type="term" value="P:AMP salvage"/>
    <property type="evidence" value="ECO:0007669"/>
    <property type="project" value="UniProtKB-UniRule"/>
</dbReference>
<dbReference type="CDD" id="cd01428">
    <property type="entry name" value="ADK"/>
    <property type="match status" value="1"/>
</dbReference>
<dbReference type="FunFam" id="3.40.50.300:FF:000106">
    <property type="entry name" value="Adenylate kinase mitochondrial"/>
    <property type="match status" value="1"/>
</dbReference>
<dbReference type="Gene3D" id="3.40.50.300">
    <property type="entry name" value="P-loop containing nucleotide triphosphate hydrolases"/>
    <property type="match status" value="1"/>
</dbReference>
<dbReference type="HAMAP" id="MF_00235">
    <property type="entry name" value="Adenylate_kinase_Adk"/>
    <property type="match status" value="1"/>
</dbReference>
<dbReference type="InterPro" id="IPR006259">
    <property type="entry name" value="Adenyl_kin_sub"/>
</dbReference>
<dbReference type="InterPro" id="IPR000850">
    <property type="entry name" value="Adenylat/UMP-CMP_kin"/>
</dbReference>
<dbReference type="InterPro" id="IPR033690">
    <property type="entry name" value="Adenylat_kinase_CS"/>
</dbReference>
<dbReference type="InterPro" id="IPR007862">
    <property type="entry name" value="Adenylate_kinase_lid-dom"/>
</dbReference>
<dbReference type="InterPro" id="IPR027417">
    <property type="entry name" value="P-loop_NTPase"/>
</dbReference>
<dbReference type="NCBIfam" id="TIGR01351">
    <property type="entry name" value="adk"/>
    <property type="match status" value="1"/>
</dbReference>
<dbReference type="NCBIfam" id="NF001381">
    <property type="entry name" value="PRK00279.1-3"/>
    <property type="match status" value="1"/>
</dbReference>
<dbReference type="NCBIfam" id="NF011099">
    <property type="entry name" value="PRK14526.1"/>
    <property type="match status" value="1"/>
</dbReference>
<dbReference type="PANTHER" id="PTHR23359">
    <property type="entry name" value="NUCLEOTIDE KINASE"/>
    <property type="match status" value="1"/>
</dbReference>
<dbReference type="Pfam" id="PF00406">
    <property type="entry name" value="ADK"/>
    <property type="match status" value="1"/>
</dbReference>
<dbReference type="Pfam" id="PF05191">
    <property type="entry name" value="ADK_lid"/>
    <property type="match status" value="1"/>
</dbReference>
<dbReference type="PRINTS" id="PR00094">
    <property type="entry name" value="ADENYLTKNASE"/>
</dbReference>
<dbReference type="SUPFAM" id="SSF52540">
    <property type="entry name" value="P-loop containing nucleoside triphosphate hydrolases"/>
    <property type="match status" value="1"/>
</dbReference>
<dbReference type="PROSITE" id="PS00113">
    <property type="entry name" value="ADENYLATE_KINASE"/>
    <property type="match status" value="1"/>
</dbReference>
<protein>
    <recommendedName>
        <fullName evidence="1">Adenylate kinase</fullName>
        <shortName evidence="1">AK</shortName>
        <ecNumber evidence="1">2.7.4.3</ecNumber>
    </recommendedName>
    <alternativeName>
        <fullName evidence="1">ATP-AMP transphosphorylase</fullName>
    </alternativeName>
    <alternativeName>
        <fullName evidence="1">ATP:AMP phosphotransferase</fullName>
    </alternativeName>
    <alternativeName>
        <fullName evidence="1">Adenylate monophosphate kinase</fullName>
    </alternativeName>
</protein>